<organism>
    <name type="scientific">Aquifex aeolicus (strain VF5)</name>
    <dbReference type="NCBI Taxonomy" id="224324"/>
    <lineage>
        <taxon>Bacteria</taxon>
        <taxon>Pseudomonadati</taxon>
        <taxon>Aquificota</taxon>
        <taxon>Aquificia</taxon>
        <taxon>Aquificales</taxon>
        <taxon>Aquificaceae</taxon>
        <taxon>Aquifex</taxon>
    </lineage>
</organism>
<accession>O67140</accession>
<keyword id="KW-0002">3D-structure</keyword>
<keyword id="KW-0963">Cytoplasm</keyword>
<keyword id="KW-0648">Protein biosynthesis</keyword>
<keyword id="KW-0663">Pyridoxal phosphate</keyword>
<keyword id="KW-1185">Reference proteome</keyword>
<keyword id="KW-0711">Selenium</keyword>
<keyword id="KW-0808">Transferase</keyword>
<name>SELA_AQUAE</name>
<proteinExistence type="evidence at protein level"/>
<dbReference type="EC" id="2.9.1.1" evidence="1"/>
<dbReference type="EMBL" id="AE000657">
    <property type="protein sequence ID" value="AAC07094.1"/>
    <property type="molecule type" value="Genomic_DNA"/>
</dbReference>
<dbReference type="PIR" id="A70389">
    <property type="entry name" value="A70389"/>
</dbReference>
<dbReference type="RefSeq" id="NP_213703.1">
    <property type="nucleotide sequence ID" value="NC_000918.1"/>
</dbReference>
<dbReference type="RefSeq" id="WP_010880641.1">
    <property type="nucleotide sequence ID" value="NC_000918.1"/>
</dbReference>
<dbReference type="PDB" id="3W1H">
    <property type="method" value="X-ray"/>
    <property type="resolution" value="3.89 A"/>
    <property type="chains" value="A/B/C/D/E=1-452"/>
</dbReference>
<dbReference type="PDB" id="3W1I">
    <property type="method" value="X-ray"/>
    <property type="resolution" value="3.19 A"/>
    <property type="chains" value="A/B/C/D/E/F/G/H/I/J=62-452"/>
</dbReference>
<dbReference type="PDB" id="3W1J">
    <property type="method" value="X-ray"/>
    <property type="resolution" value="3.25 A"/>
    <property type="chains" value="A/B/C/D/E/F/G/H/I/J=62-452"/>
</dbReference>
<dbReference type="PDB" id="3W1K">
    <property type="method" value="X-ray"/>
    <property type="resolution" value="7.50 A"/>
    <property type="chains" value="A/B/C/D/E=1-452"/>
</dbReference>
<dbReference type="PDB" id="3WCN">
    <property type="method" value="X-ray"/>
    <property type="resolution" value="3.35 A"/>
    <property type="chains" value="A/B=1-452"/>
</dbReference>
<dbReference type="PDB" id="3WCO">
    <property type="method" value="X-ray"/>
    <property type="resolution" value="2.40 A"/>
    <property type="chains" value="A/B=62-452"/>
</dbReference>
<dbReference type="PDBsum" id="3W1H"/>
<dbReference type="PDBsum" id="3W1I"/>
<dbReference type="PDBsum" id="3W1J"/>
<dbReference type="PDBsum" id="3W1K"/>
<dbReference type="PDBsum" id="3WCN"/>
<dbReference type="PDBsum" id="3WCO"/>
<dbReference type="SMR" id="O67140"/>
<dbReference type="DIP" id="DIP-61414N"/>
<dbReference type="FunCoup" id="O67140">
    <property type="interactions" value="87"/>
</dbReference>
<dbReference type="STRING" id="224324.aq_1031"/>
<dbReference type="EnsemblBacteria" id="AAC07094">
    <property type="protein sequence ID" value="AAC07094"/>
    <property type="gene ID" value="aq_1031"/>
</dbReference>
<dbReference type="KEGG" id="aae:aq_1031"/>
<dbReference type="PATRIC" id="fig|224324.8.peg.805"/>
<dbReference type="eggNOG" id="COG1921">
    <property type="taxonomic scope" value="Bacteria"/>
</dbReference>
<dbReference type="HOGENOM" id="CLU_038142_1_0_0"/>
<dbReference type="InParanoid" id="O67140"/>
<dbReference type="OrthoDB" id="9787096at2"/>
<dbReference type="BRENDA" id="2.9.1.1">
    <property type="organism ID" value="396"/>
</dbReference>
<dbReference type="UniPathway" id="UPA00906">
    <property type="reaction ID" value="UER00896"/>
</dbReference>
<dbReference type="EvolutionaryTrace" id="O67140"/>
<dbReference type="Proteomes" id="UP000000798">
    <property type="component" value="Chromosome"/>
</dbReference>
<dbReference type="GO" id="GO:0005737">
    <property type="term" value="C:cytoplasm"/>
    <property type="evidence" value="ECO:0007669"/>
    <property type="project" value="UniProtKB-SubCell"/>
</dbReference>
<dbReference type="GO" id="GO:0042802">
    <property type="term" value="F:identical protein binding"/>
    <property type="evidence" value="ECO:0000353"/>
    <property type="project" value="IntAct"/>
</dbReference>
<dbReference type="GO" id="GO:0004125">
    <property type="term" value="F:L-seryl-tRNA(Sec) selenium transferase activity"/>
    <property type="evidence" value="ECO:0000318"/>
    <property type="project" value="GO_Central"/>
</dbReference>
<dbReference type="GO" id="GO:0001717">
    <property type="term" value="P:conversion of seryl-tRNAsec to selenocys-tRNAsec"/>
    <property type="evidence" value="ECO:0007669"/>
    <property type="project" value="UniProtKB-UniRule"/>
</dbReference>
<dbReference type="GO" id="GO:0001514">
    <property type="term" value="P:selenocysteine incorporation"/>
    <property type="evidence" value="ECO:0007669"/>
    <property type="project" value="UniProtKB-UniRule"/>
</dbReference>
<dbReference type="FunFam" id="3.90.1150.180:FF:000001">
    <property type="entry name" value="L-seryl-tRNA(Sec) selenium transferase"/>
    <property type="match status" value="1"/>
</dbReference>
<dbReference type="Gene3D" id="3.90.1150.180">
    <property type="match status" value="1"/>
</dbReference>
<dbReference type="Gene3D" id="3.40.640.10">
    <property type="entry name" value="Type I PLP-dependent aspartate aminotransferase-like (Major domain)"/>
    <property type="match status" value="1"/>
</dbReference>
<dbReference type="HAMAP" id="MF_00423">
    <property type="entry name" value="SelA"/>
    <property type="match status" value="1"/>
</dbReference>
<dbReference type="InterPro" id="IPR015424">
    <property type="entry name" value="PyrdxlP-dep_Trfase"/>
</dbReference>
<dbReference type="InterPro" id="IPR015421">
    <property type="entry name" value="PyrdxlP-dep_Trfase_major"/>
</dbReference>
<dbReference type="InterPro" id="IPR018319">
    <property type="entry name" value="SelA-like"/>
</dbReference>
<dbReference type="InterPro" id="IPR004534">
    <property type="entry name" value="SelA_trans"/>
</dbReference>
<dbReference type="NCBIfam" id="TIGR00474">
    <property type="entry name" value="selA"/>
    <property type="match status" value="1"/>
</dbReference>
<dbReference type="PANTHER" id="PTHR32328">
    <property type="entry name" value="L-SERYL-TRNA(SEC) SELENIUM TRANSFERASE"/>
    <property type="match status" value="1"/>
</dbReference>
<dbReference type="PANTHER" id="PTHR32328:SF0">
    <property type="entry name" value="L-SERYL-TRNA(SEC) SELENIUM TRANSFERASE"/>
    <property type="match status" value="1"/>
</dbReference>
<dbReference type="Pfam" id="PF03841">
    <property type="entry name" value="SelA"/>
    <property type="match status" value="1"/>
</dbReference>
<dbReference type="SUPFAM" id="SSF53383">
    <property type="entry name" value="PLP-dependent transferases"/>
    <property type="match status" value="1"/>
</dbReference>
<comment type="function">
    <text evidence="1">Converts seryl-tRNA(Sec) to selenocysteinyl-tRNA(Sec) required for selenoprotein biosynthesis.</text>
</comment>
<comment type="catalytic activity">
    <reaction evidence="1">
        <text>L-seryl-tRNA(Sec) + selenophosphate + H(+) = L-selenocysteinyl-tRNA(Sec) + phosphate</text>
        <dbReference type="Rhea" id="RHEA:22728"/>
        <dbReference type="Rhea" id="RHEA-COMP:9742"/>
        <dbReference type="Rhea" id="RHEA-COMP:9743"/>
        <dbReference type="ChEBI" id="CHEBI:15378"/>
        <dbReference type="ChEBI" id="CHEBI:16144"/>
        <dbReference type="ChEBI" id="CHEBI:43474"/>
        <dbReference type="ChEBI" id="CHEBI:78533"/>
        <dbReference type="ChEBI" id="CHEBI:78573"/>
        <dbReference type="EC" id="2.9.1.1"/>
    </reaction>
</comment>
<comment type="cofactor">
    <cofactor evidence="1">
        <name>pyridoxal 5'-phosphate</name>
        <dbReference type="ChEBI" id="CHEBI:597326"/>
    </cofactor>
</comment>
<comment type="pathway">
    <text evidence="1">Aminoacyl-tRNA biosynthesis; selenocysteinyl-tRNA(Sec) biosynthesis; selenocysteinyl-tRNA(Sec) from L-seryl-tRNA(Sec) (bacterial route): step 1/1.</text>
</comment>
<comment type="interaction">
    <interactant intactId="EBI-16044058">
        <id>O67140</id>
    </interactant>
    <interactant intactId="EBI-16044058">
        <id>O67140</id>
        <label>selA</label>
    </interactant>
    <organismsDiffer>false</organismsDiffer>
    <experiments>3</experiments>
</comment>
<comment type="subcellular location">
    <subcellularLocation>
        <location evidence="1">Cytoplasm</location>
    </subcellularLocation>
</comment>
<comment type="similarity">
    <text evidence="1">Belongs to the SelA family.</text>
</comment>
<sequence length="452" mass="50848">MKSLLRQIPQISKVVEIFKKKYPEIYVVKAAREVAEKYRKEIIEGKRKDLNGFLEDVERKIKSLMKPNIKRVINATGVVINTNLGRAPLSKDVINFISEIANGYSNLEYNLEEGKRGSRIAHIEKYLNELTGAESSFVVNNNAGAVFLVLNTLAEGKEVIISRGELVEIGGSFRIPDIMKKSGAILREVGTTNKTKVSDYEGAINQNTALLMKVHKSNFYMEGFVEEVKLEDLVKLGHKYGIPTYYDAGSGLLINLKEFGISVDEPNFRDCISLGIDLVSGSGDKLLGGPQAGIIVGKKNLIEKIKKNPIARALRIDKLTLSGLEMTLKLYFEKRYEDIPVIRMLTQDEKALRQKAKRLEKLLKDIPGLKISVIKDKAKPGGGSLPELELPTYCVAIRHDRLSSQELSRRLRLAEPPIVCRIREDQLLFDMRTVFHEDLKTIKKTLQELLSI</sequence>
<feature type="chain" id="PRO_0000189594" description="L-seryl-tRNA(Sec) selenium transferase">
    <location>
        <begin position="1"/>
        <end position="452"/>
    </location>
</feature>
<feature type="modified residue" description="N6-(pyridoxal phosphate)lysine" evidence="1">
    <location>
        <position position="285"/>
    </location>
</feature>
<feature type="helix" evidence="4">
    <location>
        <begin position="2"/>
        <end position="6"/>
    </location>
</feature>
<feature type="helix" evidence="4">
    <location>
        <begin position="11"/>
        <end position="17"/>
    </location>
</feature>
<feature type="helix" evidence="4">
    <location>
        <begin position="24"/>
        <end position="43"/>
    </location>
</feature>
<feature type="helix" evidence="4">
    <location>
        <begin position="53"/>
        <end position="64"/>
    </location>
</feature>
<feature type="strand" evidence="5">
    <location>
        <begin position="73"/>
        <end position="77"/>
    </location>
</feature>
<feature type="helix" evidence="5">
    <location>
        <begin position="82"/>
        <end position="84"/>
    </location>
</feature>
<feature type="helix" evidence="5">
    <location>
        <begin position="91"/>
        <end position="101"/>
    </location>
</feature>
<feature type="strand" evidence="5">
    <location>
        <begin position="102"/>
        <end position="105"/>
    </location>
</feature>
<feature type="turn" evidence="5">
    <location>
        <begin position="111"/>
        <end position="114"/>
    </location>
</feature>
<feature type="helix" evidence="5">
    <location>
        <begin position="119"/>
        <end position="122"/>
    </location>
</feature>
<feature type="helix" evidence="5">
    <location>
        <begin position="124"/>
        <end position="131"/>
    </location>
</feature>
<feature type="strand" evidence="5">
    <location>
        <begin position="134"/>
        <end position="140"/>
    </location>
</feature>
<feature type="helix" evidence="5">
    <location>
        <begin position="142"/>
        <end position="154"/>
    </location>
</feature>
<feature type="strand" evidence="5">
    <location>
        <begin position="157"/>
        <end position="162"/>
    </location>
</feature>
<feature type="helix" evidence="5">
    <location>
        <begin position="163"/>
        <end position="166"/>
    </location>
</feature>
<feature type="strand" evidence="5">
    <location>
        <begin position="167"/>
        <end position="169"/>
    </location>
</feature>
<feature type="turn" evidence="2">
    <location>
        <begin position="170"/>
        <end position="172"/>
    </location>
</feature>
<feature type="helix" evidence="5">
    <location>
        <begin position="174"/>
        <end position="180"/>
    </location>
</feature>
<feature type="turn" evidence="5">
    <location>
        <begin position="181"/>
        <end position="183"/>
    </location>
</feature>
<feature type="strand" evidence="5">
    <location>
        <begin position="185"/>
        <end position="191"/>
    </location>
</feature>
<feature type="strand" evidence="3">
    <location>
        <begin position="192"/>
        <end position="194"/>
    </location>
</feature>
<feature type="helix" evidence="5">
    <location>
        <begin position="197"/>
        <end position="202"/>
    </location>
</feature>
<feature type="strand" evidence="5">
    <location>
        <begin position="208"/>
        <end position="214"/>
    </location>
</feature>
<feature type="strand" evidence="2">
    <location>
        <begin position="218"/>
        <end position="224"/>
    </location>
</feature>
<feature type="helix" evidence="5">
    <location>
        <begin position="230"/>
        <end position="240"/>
    </location>
</feature>
<feature type="strand" evidence="5">
    <location>
        <begin position="244"/>
        <end position="250"/>
    </location>
</feature>
<feature type="helix" evidence="5">
    <location>
        <begin position="256"/>
        <end position="259"/>
    </location>
</feature>
<feature type="helix" evidence="5">
    <location>
        <begin position="268"/>
        <end position="273"/>
    </location>
</feature>
<feature type="strand" evidence="5">
    <location>
        <begin position="277"/>
        <end position="282"/>
    </location>
</feature>
<feature type="strand" evidence="5">
    <location>
        <begin position="289"/>
        <end position="291"/>
    </location>
</feature>
<feature type="strand" evidence="5">
    <location>
        <begin position="293"/>
        <end position="297"/>
    </location>
</feature>
<feature type="helix" evidence="5">
    <location>
        <begin position="299"/>
        <end position="307"/>
    </location>
</feature>
<feature type="helix" evidence="5">
    <location>
        <begin position="310"/>
        <end position="313"/>
    </location>
</feature>
<feature type="helix" evidence="5">
    <location>
        <begin position="318"/>
        <end position="332"/>
    </location>
</feature>
<feature type="helix" evidence="5">
    <location>
        <begin position="336"/>
        <end position="338"/>
    </location>
</feature>
<feature type="helix" evidence="5">
    <location>
        <begin position="340"/>
        <end position="345"/>
    </location>
</feature>
<feature type="helix" evidence="5">
    <location>
        <begin position="349"/>
        <end position="362"/>
    </location>
</feature>
<feature type="turn" evidence="5">
    <location>
        <begin position="363"/>
        <end position="365"/>
    </location>
</feature>
<feature type="strand" evidence="5">
    <location>
        <begin position="369"/>
        <end position="378"/>
    </location>
</feature>
<feature type="strand" evidence="2">
    <location>
        <begin position="381"/>
        <end position="384"/>
    </location>
</feature>
<feature type="strand" evidence="5">
    <location>
        <begin position="390"/>
        <end position="402"/>
    </location>
</feature>
<feature type="helix" evidence="5">
    <location>
        <begin position="404"/>
        <end position="413"/>
    </location>
</feature>
<feature type="strand" evidence="5">
    <location>
        <begin position="414"/>
        <end position="416"/>
    </location>
</feature>
<feature type="strand" evidence="5">
    <location>
        <begin position="418"/>
        <end position="423"/>
    </location>
</feature>
<feature type="strand" evidence="5">
    <location>
        <begin position="426"/>
        <end position="430"/>
    </location>
</feature>
<feature type="helix" evidence="2">
    <location>
        <begin position="431"/>
        <end position="433"/>
    </location>
</feature>
<feature type="helix" evidence="5">
    <location>
        <begin position="436"/>
        <end position="438"/>
    </location>
</feature>
<feature type="helix" evidence="5">
    <location>
        <begin position="439"/>
        <end position="449"/>
    </location>
</feature>
<reference key="1">
    <citation type="journal article" date="1998" name="Nature">
        <title>The complete genome of the hyperthermophilic bacterium Aquifex aeolicus.</title>
        <authorList>
            <person name="Deckert G."/>
            <person name="Warren P.V."/>
            <person name="Gaasterland T."/>
            <person name="Young W.G."/>
            <person name="Lenox A.L."/>
            <person name="Graham D.E."/>
            <person name="Overbeek R."/>
            <person name="Snead M.A."/>
            <person name="Keller M."/>
            <person name="Aujay M."/>
            <person name="Huber R."/>
            <person name="Feldman R.A."/>
            <person name="Short J.M."/>
            <person name="Olsen G.J."/>
            <person name="Swanson R.V."/>
        </authorList>
    </citation>
    <scope>NUCLEOTIDE SEQUENCE [LARGE SCALE GENOMIC DNA]</scope>
    <source>
        <strain>VF5</strain>
    </source>
</reference>
<gene>
    <name evidence="1" type="primary">selA</name>
    <name type="ordered locus">aq_1031</name>
</gene>
<evidence type="ECO:0000255" key="1">
    <source>
        <dbReference type="HAMAP-Rule" id="MF_00423"/>
    </source>
</evidence>
<evidence type="ECO:0007829" key="2">
    <source>
        <dbReference type="PDB" id="3W1I"/>
    </source>
</evidence>
<evidence type="ECO:0007829" key="3">
    <source>
        <dbReference type="PDB" id="3W1J"/>
    </source>
</evidence>
<evidence type="ECO:0007829" key="4">
    <source>
        <dbReference type="PDB" id="3WCN"/>
    </source>
</evidence>
<evidence type="ECO:0007829" key="5">
    <source>
        <dbReference type="PDB" id="3WCO"/>
    </source>
</evidence>
<protein>
    <recommendedName>
        <fullName evidence="1">L-seryl-tRNA(Sec) selenium transferase</fullName>
        <ecNumber evidence="1">2.9.1.1</ecNumber>
    </recommendedName>
    <alternativeName>
        <fullName evidence="1">Selenocysteine synthase</fullName>
        <shortName evidence="1">Sec synthase</shortName>
    </alternativeName>
    <alternativeName>
        <fullName evidence="1">Selenocysteinyl-tRNA(Sec) synthase</fullName>
    </alternativeName>
</protein>